<protein>
    <recommendedName>
        <fullName>Histone H1-delta</fullName>
    </recommendedName>
</protein>
<comment type="function">
    <text>Histones H1 are necessary for the condensation of nucleosome chains into higher-order structures.</text>
</comment>
<comment type="subcellular location">
    <subcellularLocation>
        <location>Nucleus</location>
    </subcellularLocation>
    <subcellularLocation>
        <location>Chromosome</location>
    </subcellularLocation>
</comment>
<comment type="similarity">
    <text evidence="1">Belongs to the histone H1/H5 family.</text>
</comment>
<reference key="1">
    <citation type="journal article" date="1988" name="Proc. Natl. Acad. Sci. U.S.A.">
        <title>A histone H1 protein in sea urchins is encoded by a poly(A)+ mRNA.</title>
        <authorList>
            <person name="Lieber T."/>
            <person name="Angerer L.M."/>
            <person name="Angerer R.C."/>
            <person name="Childs G."/>
        </authorList>
    </citation>
    <scope>NUCLEOTIDE SEQUENCE [GENOMIC DNA]</scope>
</reference>
<feature type="chain" id="PRO_0000195945" description="Histone H1-delta">
    <location>
        <begin position="1"/>
        <end position="185"/>
    </location>
</feature>
<feature type="domain" description="H15" evidence="1">
    <location>
        <begin position="32"/>
        <end position="105"/>
    </location>
</feature>
<feature type="region of interest" description="Disordered" evidence="2">
    <location>
        <begin position="1"/>
        <end position="37"/>
    </location>
</feature>
<feature type="region of interest" description="Disordered" evidence="2">
    <location>
        <begin position="90"/>
        <end position="185"/>
    </location>
</feature>
<feature type="compositionally biased region" description="Basic residues" evidence="2">
    <location>
        <begin position="109"/>
        <end position="185"/>
    </location>
</feature>
<name>H1D_STRPU</name>
<keyword id="KW-0158">Chromosome</keyword>
<keyword id="KW-0238">DNA-binding</keyword>
<keyword id="KW-0539">Nucleus</keyword>
<keyword id="KW-1185">Reference proteome</keyword>
<evidence type="ECO:0000255" key="1">
    <source>
        <dbReference type="PROSITE-ProRule" id="PRU00837"/>
    </source>
</evidence>
<evidence type="ECO:0000256" key="2">
    <source>
        <dbReference type="SAM" id="MobiDB-lite"/>
    </source>
</evidence>
<proteinExistence type="inferred from homology"/>
<dbReference type="EMBL" id="J03807">
    <property type="protein sequence ID" value="AAA30055.1"/>
    <property type="molecule type" value="Genomic_DNA"/>
</dbReference>
<dbReference type="PIR" id="A32137">
    <property type="entry name" value="A32137"/>
</dbReference>
<dbReference type="RefSeq" id="NP_999722.1">
    <property type="nucleotide sequence ID" value="NM_214557.2"/>
</dbReference>
<dbReference type="SMR" id="P15870"/>
<dbReference type="FunCoup" id="P15870">
    <property type="interactions" value="46"/>
</dbReference>
<dbReference type="EnsemblMetazoa" id="NM_214557">
    <property type="protein sequence ID" value="NP_999722"/>
    <property type="gene ID" value="LOC373353"/>
</dbReference>
<dbReference type="GeneID" id="373353"/>
<dbReference type="KEGG" id="spu:373353"/>
<dbReference type="eggNOG" id="KOG4012">
    <property type="taxonomic scope" value="Eukaryota"/>
</dbReference>
<dbReference type="HOGENOM" id="CLU_052897_1_1_1"/>
<dbReference type="InParanoid" id="P15870"/>
<dbReference type="OMA" id="IKNHYKV"/>
<dbReference type="OrthoDB" id="6361449at2759"/>
<dbReference type="PhylomeDB" id="P15870"/>
<dbReference type="Proteomes" id="UP000007110">
    <property type="component" value="Unassembled WGS sequence"/>
</dbReference>
<dbReference type="GO" id="GO:0000786">
    <property type="term" value="C:nucleosome"/>
    <property type="evidence" value="ECO:0007669"/>
    <property type="project" value="InterPro"/>
</dbReference>
<dbReference type="GO" id="GO:0005634">
    <property type="term" value="C:nucleus"/>
    <property type="evidence" value="ECO:0000318"/>
    <property type="project" value="GO_Central"/>
</dbReference>
<dbReference type="GO" id="GO:0003690">
    <property type="term" value="F:double-stranded DNA binding"/>
    <property type="evidence" value="ECO:0000318"/>
    <property type="project" value="GO_Central"/>
</dbReference>
<dbReference type="GO" id="GO:0031492">
    <property type="term" value="F:nucleosomal DNA binding"/>
    <property type="evidence" value="ECO:0000318"/>
    <property type="project" value="GO_Central"/>
</dbReference>
<dbReference type="GO" id="GO:0030527">
    <property type="term" value="F:structural constituent of chromatin"/>
    <property type="evidence" value="ECO:0007669"/>
    <property type="project" value="InterPro"/>
</dbReference>
<dbReference type="GO" id="GO:0030261">
    <property type="term" value="P:chromosome condensation"/>
    <property type="evidence" value="ECO:0000318"/>
    <property type="project" value="GO_Central"/>
</dbReference>
<dbReference type="GO" id="GO:0045910">
    <property type="term" value="P:negative regulation of DNA recombination"/>
    <property type="evidence" value="ECO:0000318"/>
    <property type="project" value="GO_Central"/>
</dbReference>
<dbReference type="GO" id="GO:0006334">
    <property type="term" value="P:nucleosome assembly"/>
    <property type="evidence" value="ECO:0007669"/>
    <property type="project" value="InterPro"/>
</dbReference>
<dbReference type="CDD" id="cd00073">
    <property type="entry name" value="H15"/>
    <property type="match status" value="1"/>
</dbReference>
<dbReference type="FunFam" id="1.10.10.10:FF:000140">
    <property type="entry name" value="Histone H1.0"/>
    <property type="match status" value="1"/>
</dbReference>
<dbReference type="Gene3D" id="1.10.10.10">
    <property type="entry name" value="Winged helix-like DNA-binding domain superfamily/Winged helix DNA-binding domain"/>
    <property type="match status" value="1"/>
</dbReference>
<dbReference type="InterPro" id="IPR005819">
    <property type="entry name" value="H1/H5"/>
</dbReference>
<dbReference type="InterPro" id="IPR005818">
    <property type="entry name" value="Histone_H1/H5_H15"/>
</dbReference>
<dbReference type="InterPro" id="IPR036388">
    <property type="entry name" value="WH-like_DNA-bd_sf"/>
</dbReference>
<dbReference type="InterPro" id="IPR036390">
    <property type="entry name" value="WH_DNA-bd_sf"/>
</dbReference>
<dbReference type="PANTHER" id="PTHR11467:SF36">
    <property type="entry name" value="HISTONE 24-RELATED"/>
    <property type="match status" value="1"/>
</dbReference>
<dbReference type="PANTHER" id="PTHR11467">
    <property type="entry name" value="HISTONE H1"/>
    <property type="match status" value="1"/>
</dbReference>
<dbReference type="Pfam" id="PF00538">
    <property type="entry name" value="Linker_histone"/>
    <property type="match status" value="1"/>
</dbReference>
<dbReference type="PRINTS" id="PR00624">
    <property type="entry name" value="HISTONEH5"/>
</dbReference>
<dbReference type="SMART" id="SM00526">
    <property type="entry name" value="H15"/>
    <property type="match status" value="1"/>
</dbReference>
<dbReference type="SUPFAM" id="SSF46785">
    <property type="entry name" value="Winged helix' DNA-binding domain"/>
    <property type="match status" value="1"/>
</dbReference>
<dbReference type="PROSITE" id="PS51504">
    <property type="entry name" value="H15"/>
    <property type="match status" value="1"/>
</dbReference>
<accession>P15870</accession>
<sequence>MADTDAAPAAPAPSTPKKAAKKKASKPKTPASHPKYSDMIASALESLKEKKGSSRQAILKYVKANFTVGDNANVHIKQALKRGVTSGQLRHVKGSGASGSFLLAEKTKTPKKAAAKKATPKKKPAAKKTKKPAAKKATKKPAKKPAAKKKVAKPAAKKAAKPVAKKATPKKKVVKKAAKGKGKKK</sequence>
<organism>
    <name type="scientific">Strongylocentrotus purpuratus</name>
    <name type="common">Purple sea urchin</name>
    <dbReference type="NCBI Taxonomy" id="7668"/>
    <lineage>
        <taxon>Eukaryota</taxon>
        <taxon>Metazoa</taxon>
        <taxon>Echinodermata</taxon>
        <taxon>Eleutherozoa</taxon>
        <taxon>Echinozoa</taxon>
        <taxon>Echinoidea</taxon>
        <taxon>Euechinoidea</taxon>
        <taxon>Echinacea</taxon>
        <taxon>Camarodonta</taxon>
        <taxon>Echinidea</taxon>
        <taxon>Strongylocentrotidae</taxon>
        <taxon>Strongylocentrotus</taxon>
    </lineage>
</organism>